<name>XPT_LACLS</name>
<reference key="1">
    <citation type="journal article" date="2006" name="Proc. Natl. Acad. Sci. U.S.A.">
        <title>Comparative genomics of the lactic acid bacteria.</title>
        <authorList>
            <person name="Makarova K.S."/>
            <person name="Slesarev A."/>
            <person name="Wolf Y.I."/>
            <person name="Sorokin A."/>
            <person name="Mirkin B."/>
            <person name="Koonin E.V."/>
            <person name="Pavlov A."/>
            <person name="Pavlova N."/>
            <person name="Karamychev V."/>
            <person name="Polouchine N."/>
            <person name="Shakhova V."/>
            <person name="Grigoriev I."/>
            <person name="Lou Y."/>
            <person name="Rohksar D."/>
            <person name="Lucas S."/>
            <person name="Huang K."/>
            <person name="Goodstein D.M."/>
            <person name="Hawkins T."/>
            <person name="Plengvidhya V."/>
            <person name="Welker D."/>
            <person name="Hughes J."/>
            <person name="Goh Y."/>
            <person name="Benson A."/>
            <person name="Baldwin K."/>
            <person name="Lee J.-H."/>
            <person name="Diaz-Muniz I."/>
            <person name="Dosti B."/>
            <person name="Smeianov V."/>
            <person name="Wechter W."/>
            <person name="Barabote R."/>
            <person name="Lorca G."/>
            <person name="Altermann E."/>
            <person name="Barrangou R."/>
            <person name="Ganesan B."/>
            <person name="Xie Y."/>
            <person name="Rawsthorne H."/>
            <person name="Tamir D."/>
            <person name="Parker C."/>
            <person name="Breidt F."/>
            <person name="Broadbent J.R."/>
            <person name="Hutkins R."/>
            <person name="O'Sullivan D."/>
            <person name="Steele J."/>
            <person name="Unlu G."/>
            <person name="Saier M.H. Jr."/>
            <person name="Klaenhammer T."/>
            <person name="Richardson P."/>
            <person name="Kozyavkin S."/>
            <person name="Weimer B.C."/>
            <person name="Mills D.A."/>
        </authorList>
    </citation>
    <scope>NUCLEOTIDE SEQUENCE [LARGE SCALE GENOMIC DNA]</scope>
    <source>
        <strain>SK11</strain>
    </source>
</reference>
<evidence type="ECO:0000255" key="1">
    <source>
        <dbReference type="HAMAP-Rule" id="MF_01184"/>
    </source>
</evidence>
<protein>
    <recommendedName>
        <fullName evidence="1">Xanthine phosphoribosyltransferase</fullName>
        <shortName evidence="1">XPRTase</shortName>
        <ecNumber evidence="1">2.4.2.22</ecNumber>
    </recommendedName>
</protein>
<proteinExistence type="inferred from homology"/>
<dbReference type="EC" id="2.4.2.22" evidence="1"/>
<dbReference type="EMBL" id="CP000425">
    <property type="protein sequence ID" value="ABJ72793.1"/>
    <property type="molecule type" value="Genomic_DNA"/>
</dbReference>
<dbReference type="RefSeq" id="WP_011676265.1">
    <property type="nucleotide sequence ID" value="NC_008527.1"/>
</dbReference>
<dbReference type="SMR" id="Q02Z29"/>
<dbReference type="KEGG" id="llc:LACR_1265"/>
<dbReference type="HOGENOM" id="CLU_099015_0_0_9"/>
<dbReference type="UniPathway" id="UPA00602">
    <property type="reaction ID" value="UER00658"/>
</dbReference>
<dbReference type="Proteomes" id="UP000000240">
    <property type="component" value="Chromosome"/>
</dbReference>
<dbReference type="GO" id="GO:0005737">
    <property type="term" value="C:cytoplasm"/>
    <property type="evidence" value="ECO:0007669"/>
    <property type="project" value="UniProtKB-SubCell"/>
</dbReference>
<dbReference type="GO" id="GO:0000310">
    <property type="term" value="F:xanthine phosphoribosyltransferase activity"/>
    <property type="evidence" value="ECO:0007669"/>
    <property type="project" value="UniProtKB-UniRule"/>
</dbReference>
<dbReference type="GO" id="GO:0006166">
    <property type="term" value="P:purine ribonucleoside salvage"/>
    <property type="evidence" value="ECO:0007669"/>
    <property type="project" value="UniProtKB-KW"/>
</dbReference>
<dbReference type="GO" id="GO:0046110">
    <property type="term" value="P:xanthine metabolic process"/>
    <property type="evidence" value="ECO:0007669"/>
    <property type="project" value="InterPro"/>
</dbReference>
<dbReference type="GO" id="GO:0032265">
    <property type="term" value="P:XMP salvage"/>
    <property type="evidence" value="ECO:0007669"/>
    <property type="project" value="UniProtKB-UniRule"/>
</dbReference>
<dbReference type="CDD" id="cd06223">
    <property type="entry name" value="PRTases_typeI"/>
    <property type="match status" value="1"/>
</dbReference>
<dbReference type="Gene3D" id="3.40.50.2020">
    <property type="match status" value="1"/>
</dbReference>
<dbReference type="HAMAP" id="MF_01184">
    <property type="entry name" value="XPRTase"/>
    <property type="match status" value="1"/>
</dbReference>
<dbReference type="InterPro" id="IPR000836">
    <property type="entry name" value="PRibTrfase_dom"/>
</dbReference>
<dbReference type="InterPro" id="IPR029057">
    <property type="entry name" value="PRTase-like"/>
</dbReference>
<dbReference type="InterPro" id="IPR050118">
    <property type="entry name" value="Pur/Pyrimidine_PRTase"/>
</dbReference>
<dbReference type="InterPro" id="IPR010079">
    <property type="entry name" value="Xanthine_PRibTrfase"/>
</dbReference>
<dbReference type="NCBIfam" id="NF006671">
    <property type="entry name" value="PRK09219.1"/>
    <property type="match status" value="1"/>
</dbReference>
<dbReference type="NCBIfam" id="TIGR01744">
    <property type="entry name" value="XPRTase"/>
    <property type="match status" value="1"/>
</dbReference>
<dbReference type="PANTHER" id="PTHR43864">
    <property type="entry name" value="HYPOXANTHINE/GUANINE PHOSPHORIBOSYLTRANSFERASE"/>
    <property type="match status" value="1"/>
</dbReference>
<dbReference type="PANTHER" id="PTHR43864:SF1">
    <property type="entry name" value="XANTHINE PHOSPHORIBOSYLTRANSFERASE"/>
    <property type="match status" value="1"/>
</dbReference>
<dbReference type="Pfam" id="PF00156">
    <property type="entry name" value="Pribosyltran"/>
    <property type="match status" value="1"/>
</dbReference>
<dbReference type="SUPFAM" id="SSF53271">
    <property type="entry name" value="PRTase-like"/>
    <property type="match status" value="1"/>
</dbReference>
<keyword id="KW-0963">Cytoplasm</keyword>
<keyword id="KW-0328">Glycosyltransferase</keyword>
<keyword id="KW-0660">Purine salvage</keyword>
<keyword id="KW-0808">Transferase</keyword>
<accession>Q02Z29</accession>
<sequence length="197" mass="21806">MKLLEDRIHSDGQVLGQDILKVDRFLTHQVDYQLMKEIGKRFAQVYADAEVTKVVTIEASGIAPALYAAESLNVPMIFAKKAKNVTMNDDLLITEVYSFTKKLTSTVQISSKLIEEGDKVLIIDDFLANGQAALGLVHLMEQAKAEVVGLGMVIEKSFQDGRQKLLDQGMKLTSIARIEKFEDGKVIFAPADDIAFD</sequence>
<feature type="chain" id="PRO_0000339714" description="Xanthine phosphoribosyltransferase">
    <location>
        <begin position="1"/>
        <end position="197"/>
    </location>
</feature>
<feature type="binding site" evidence="1">
    <location>
        <position position="20"/>
    </location>
    <ligand>
        <name>xanthine</name>
        <dbReference type="ChEBI" id="CHEBI:17712"/>
    </ligand>
</feature>
<feature type="binding site" evidence="1">
    <location>
        <position position="27"/>
    </location>
    <ligand>
        <name>xanthine</name>
        <dbReference type="ChEBI" id="CHEBI:17712"/>
    </ligand>
</feature>
<feature type="binding site" evidence="1">
    <location>
        <begin position="128"/>
        <end position="132"/>
    </location>
    <ligand>
        <name>5-phospho-alpha-D-ribose 1-diphosphate</name>
        <dbReference type="ChEBI" id="CHEBI:58017"/>
    </ligand>
</feature>
<feature type="binding site" evidence="1">
    <location>
        <position position="156"/>
    </location>
    <ligand>
        <name>xanthine</name>
        <dbReference type="ChEBI" id="CHEBI:17712"/>
    </ligand>
</feature>
<organism>
    <name type="scientific">Lactococcus lactis subsp. cremoris (strain SK11)</name>
    <dbReference type="NCBI Taxonomy" id="272622"/>
    <lineage>
        <taxon>Bacteria</taxon>
        <taxon>Bacillati</taxon>
        <taxon>Bacillota</taxon>
        <taxon>Bacilli</taxon>
        <taxon>Lactobacillales</taxon>
        <taxon>Streptococcaceae</taxon>
        <taxon>Lactococcus</taxon>
        <taxon>Lactococcus cremoris subsp. cremoris</taxon>
    </lineage>
</organism>
<comment type="function">
    <text evidence="1">Converts the preformed base xanthine, a product of nucleic acid breakdown, to xanthosine 5'-monophosphate (XMP), so it can be reused for RNA or DNA synthesis.</text>
</comment>
<comment type="catalytic activity">
    <reaction evidence="1">
        <text>XMP + diphosphate = xanthine + 5-phospho-alpha-D-ribose 1-diphosphate</text>
        <dbReference type="Rhea" id="RHEA:10800"/>
        <dbReference type="ChEBI" id="CHEBI:17712"/>
        <dbReference type="ChEBI" id="CHEBI:33019"/>
        <dbReference type="ChEBI" id="CHEBI:57464"/>
        <dbReference type="ChEBI" id="CHEBI:58017"/>
        <dbReference type="EC" id="2.4.2.22"/>
    </reaction>
</comment>
<comment type="pathway">
    <text evidence="1">Purine metabolism; XMP biosynthesis via salvage pathway; XMP from xanthine: step 1/1.</text>
</comment>
<comment type="subunit">
    <text evidence="1">Homodimer.</text>
</comment>
<comment type="subcellular location">
    <subcellularLocation>
        <location evidence="1">Cytoplasm</location>
    </subcellularLocation>
</comment>
<comment type="similarity">
    <text evidence="1">Belongs to the purine/pyrimidine phosphoribosyltransferase family. Xpt subfamily.</text>
</comment>
<gene>
    <name evidence="1" type="primary">xpt</name>
    <name type="ordered locus">LACR_1265</name>
</gene>